<accession>D2PPM8</accession>
<reference key="1">
    <citation type="submission" date="2009-09" db="EMBL/GenBank/DDBJ databases">
        <title>The complete genome of Kribbella flavida DSM 17836.</title>
        <authorList>
            <consortium name="US DOE Joint Genome Institute (JGI-PGF)"/>
            <person name="Lucas S."/>
            <person name="Copeland A."/>
            <person name="Lapidus A."/>
            <person name="Glavina del Rio T."/>
            <person name="Dalin E."/>
            <person name="Tice H."/>
            <person name="Bruce D."/>
            <person name="Goodwin L."/>
            <person name="Pitluck S."/>
            <person name="Kyrpides N."/>
            <person name="Mavromatis K."/>
            <person name="Ivanova N."/>
            <person name="Saunders E."/>
            <person name="Brettin T."/>
            <person name="Detter J.C."/>
            <person name="Han C."/>
            <person name="Larimer F."/>
            <person name="Land M."/>
            <person name="Hauser L."/>
            <person name="Markowitz V."/>
            <person name="Cheng J.-F."/>
            <person name="Hugenholtz P."/>
            <person name="Woyke T."/>
            <person name="Wu D."/>
            <person name="Pukall R."/>
            <person name="Klenk H.-P."/>
            <person name="Eisen J.A."/>
        </authorList>
    </citation>
    <scope>NUCLEOTIDE SEQUENCE [LARGE SCALE GENOMIC DNA]</scope>
    <source>
        <strain evidence="8">DSM 17836 / JCM 10339 / NBRC 14399</strain>
    </source>
</reference>
<reference key="2">
    <citation type="journal article" date="2016" name="J. Biol. Chem.">
        <title>Two novel glycoside hydrolases responsible for the catabolism of cyclobis-(1-&gt;6)-alpha-nigerosyl.</title>
        <authorList>
            <person name="Tagami T."/>
            <person name="Miyano E."/>
            <person name="Sadahiro J."/>
            <person name="Okuyama M."/>
            <person name="Iwasaki T."/>
            <person name="Kimura A."/>
        </authorList>
    </citation>
    <scope>FUNCTION</scope>
    <scope>CATALYTIC ACTIVITY</scope>
    <scope>BIOPHYSICOCHEMICAL PROPERTIES</scope>
    <scope>MUTAGENESIS OF GLU-178 AND GLU-335</scope>
    <scope>SUBCELLULAR LOCATION</scope>
    <scope>ACTIVE SITE</scope>
    <scope>SUBSTRATE SPECIFICITY</scope>
    <source>
        <strain>DSM 17836 / JCM 10339 / NBRC 14399</strain>
    </source>
</reference>
<comment type="function">
    <text evidence="3">Involved in the intracellular degradation of the cyclic tetrasaccharide cyclobis-(1-6)-alpha-nigerosyl (CNN) formed extracellularly from starch. Catalyzes the hydrolysis of alpha-1,6-glucosidic linkage from the non-reducing end of isomaltose to yield beta-D-glucose and D-glucose. Can also act on panose and isomaltotriose at a lower rate. It displays low or no activity toward CNN and the general GH15 enzyme substrates such as maltose, soluble starch or dextran.</text>
</comment>
<comment type="catalytic activity">
    <reaction evidence="3">
        <text>isomaltose + H2O = beta-D-glucose + D-glucose</text>
        <dbReference type="Rhea" id="RHEA:52752"/>
        <dbReference type="ChEBI" id="CHEBI:4167"/>
        <dbReference type="ChEBI" id="CHEBI:15377"/>
        <dbReference type="ChEBI" id="CHEBI:15903"/>
        <dbReference type="ChEBI" id="CHEBI:28189"/>
        <dbReference type="EC" id="3.2.1.205"/>
    </reaction>
</comment>
<comment type="biophysicochemical properties">
    <kinetics>
        <KM evidence="3">1.68 mM for panose</KM>
        <KM evidence="3">2.38 mM for isomaltose</KM>
        <KM evidence="3">4.36 mM for isomaltotriose</KM>
        <text evidence="3">kcat is 11.4 sec(-1) for isomaltose as substrate. kcat is 1.17 sec(-1) for panose as substrate. kcat is 1.07 sec(-1) for isomaltotriose as substrate.</text>
    </kinetics>
    <phDependence>
        <text evidence="3">Optimum pH is 6.7. Stable between pH 6.5 and 11.2.</text>
    </phDependence>
    <temperatureDependence>
        <text evidence="3">Optimum temperature is under 35 degrees Celsius.</text>
    </temperatureDependence>
</comment>
<comment type="subcellular location">
    <subcellularLocation>
        <location evidence="6">Cytoplasm</location>
    </subcellularLocation>
</comment>
<comment type="similarity">
    <text evidence="5">Belongs to the glycosyl hydrolase 15 family.</text>
</comment>
<gene>
    <name evidence="7" type="ordered locus">Kfla_1896</name>
</gene>
<organism>
    <name type="scientific">Kribbella flavida (strain DSM 17836 / JCM 10339 / NBRC 14399)</name>
    <dbReference type="NCBI Taxonomy" id="479435"/>
    <lineage>
        <taxon>Bacteria</taxon>
        <taxon>Bacillati</taxon>
        <taxon>Actinomycetota</taxon>
        <taxon>Actinomycetes</taxon>
        <taxon>Propionibacteriales</taxon>
        <taxon>Kribbellaceae</taxon>
        <taxon>Kribbella</taxon>
    </lineage>
</organism>
<proteinExistence type="evidence at protein level"/>
<protein>
    <recommendedName>
        <fullName evidence="4">Isomaltose glucohydrolase</fullName>
        <ecNumber evidence="3">3.2.1.205</ecNumber>
    </recommendedName>
</protein>
<sequence length="385" mass="41807">MTTSARDTGLDSHELARLHELARHSHAVITRHQDAGGAYPAAPTFSAYRGYAWLRDGSFTAEGISRYGDVASAGRFHDWVDGVLRRRRGQVDDLLAAVDRGEVPSNEGMLPTRFTFDGNDGSDPWWDFQTDGYGMWLWSVVTHAARHGLDLERWRAGIDVAVDYLLAFWDRPCYDWWEEHVEHRHVSTLGAIHGGLVAVGTCAALRSAPWSAATLQVAARIRSLVSAEGVVDGHLVKWLGSSAVDGSLPACVVPFGLVPPDDDVAAMTRAAVAKDLDVDGGVHRFAADVFYGGGQWILLSALLGWNLAAAGDTAGALRHLRWIADQADADGDLPEQVPHHLLHPGSRAEWVARWGTVATPLLWSHGMYLILADELGLLPPAAKDA</sequence>
<name>IMGH_KRIFD</name>
<evidence type="ECO:0000250" key="1">
    <source>
        <dbReference type="UniProtKB" id="P69327"/>
    </source>
</evidence>
<evidence type="ECO:0000255" key="2">
    <source>
        <dbReference type="PROSITE-ProRule" id="PRU10051"/>
    </source>
</evidence>
<evidence type="ECO:0000269" key="3">
    <source>
    </source>
</evidence>
<evidence type="ECO:0000303" key="4">
    <source>
    </source>
</evidence>
<evidence type="ECO:0000305" key="5"/>
<evidence type="ECO:0000305" key="6">
    <source>
    </source>
</evidence>
<evidence type="ECO:0000312" key="7">
    <source>
        <dbReference type="EMBL" id="ADB30990.1"/>
    </source>
</evidence>
<evidence type="ECO:0000312" key="8">
    <source>
        <dbReference type="Proteomes" id="UP000007967"/>
    </source>
</evidence>
<evidence type="ECO:0007829" key="9">
    <source>
        <dbReference type="PDB" id="5Z3E"/>
    </source>
</evidence>
<evidence type="ECO:0007829" key="10">
    <source>
        <dbReference type="PDB" id="5Z3F"/>
    </source>
</evidence>
<dbReference type="EC" id="3.2.1.205" evidence="3"/>
<dbReference type="EMBL" id="CP001736">
    <property type="protein sequence ID" value="ADB30990.1"/>
    <property type="molecule type" value="Genomic_DNA"/>
</dbReference>
<dbReference type="RefSeq" id="WP_012919546.1">
    <property type="nucleotide sequence ID" value="NC_013729.1"/>
</dbReference>
<dbReference type="PDB" id="5Z3A">
    <property type="method" value="X-ray"/>
    <property type="resolution" value="1.40 A"/>
    <property type="chains" value="A=1-385"/>
</dbReference>
<dbReference type="PDB" id="5Z3B">
    <property type="method" value="X-ray"/>
    <property type="resolution" value="1.25 A"/>
    <property type="chains" value="A=1-385"/>
</dbReference>
<dbReference type="PDB" id="5Z3C">
    <property type="method" value="X-ray"/>
    <property type="resolution" value="1.60 A"/>
    <property type="chains" value="A=1-385"/>
</dbReference>
<dbReference type="PDB" id="5Z3D">
    <property type="method" value="X-ray"/>
    <property type="resolution" value="1.25 A"/>
    <property type="chains" value="A=1-385"/>
</dbReference>
<dbReference type="PDB" id="5Z3E">
    <property type="method" value="X-ray"/>
    <property type="resolution" value="1.10 A"/>
    <property type="chains" value="A=1-385"/>
</dbReference>
<dbReference type="PDB" id="5Z3F">
    <property type="method" value="X-ray"/>
    <property type="resolution" value="1.10 A"/>
    <property type="chains" value="A=1-385"/>
</dbReference>
<dbReference type="PDB" id="7C24">
    <property type="method" value="X-ray"/>
    <property type="resolution" value="1.71 A"/>
    <property type="chains" value="A=1-385"/>
</dbReference>
<dbReference type="PDB" id="7C25">
    <property type="method" value="X-ray"/>
    <property type="resolution" value="1.50 A"/>
    <property type="chains" value="A=1-385"/>
</dbReference>
<dbReference type="PDB" id="7C26">
    <property type="method" value="X-ray"/>
    <property type="resolution" value="1.80 A"/>
    <property type="chains" value="A=1-385"/>
</dbReference>
<dbReference type="PDB" id="7C27">
    <property type="method" value="X-ray"/>
    <property type="resolution" value="1.91 A"/>
    <property type="chains" value="A=1-385"/>
</dbReference>
<dbReference type="PDBsum" id="5Z3A"/>
<dbReference type="PDBsum" id="5Z3B"/>
<dbReference type="PDBsum" id="5Z3C"/>
<dbReference type="PDBsum" id="5Z3D"/>
<dbReference type="PDBsum" id="5Z3E"/>
<dbReference type="PDBsum" id="5Z3F"/>
<dbReference type="PDBsum" id="7C24"/>
<dbReference type="PDBsum" id="7C25"/>
<dbReference type="PDBsum" id="7C26"/>
<dbReference type="PDBsum" id="7C27"/>
<dbReference type="SMR" id="D2PPM8"/>
<dbReference type="STRING" id="479435.Kfla_1896"/>
<dbReference type="CAZy" id="GH15">
    <property type="family name" value="Glycoside Hydrolase Family 15"/>
</dbReference>
<dbReference type="KEGG" id="kfl:Kfla_1896"/>
<dbReference type="eggNOG" id="COG3387">
    <property type="taxonomic scope" value="Bacteria"/>
</dbReference>
<dbReference type="HOGENOM" id="CLU_801178_0_0_11"/>
<dbReference type="OrthoDB" id="3902805at2"/>
<dbReference type="BioCyc" id="MetaCyc:MONOMER-20072"/>
<dbReference type="BRENDA" id="3.2.1.205">
    <property type="organism ID" value="14106"/>
</dbReference>
<dbReference type="Proteomes" id="UP000007967">
    <property type="component" value="Chromosome"/>
</dbReference>
<dbReference type="GO" id="GO:0005737">
    <property type="term" value="C:cytoplasm"/>
    <property type="evidence" value="ECO:0007669"/>
    <property type="project" value="UniProtKB-SubCell"/>
</dbReference>
<dbReference type="GO" id="GO:0004553">
    <property type="term" value="F:hydrolase activity, hydrolyzing O-glycosyl compounds"/>
    <property type="evidence" value="ECO:0007669"/>
    <property type="project" value="TreeGrafter"/>
</dbReference>
<dbReference type="GO" id="GO:0000272">
    <property type="term" value="P:polysaccharide catabolic process"/>
    <property type="evidence" value="ECO:0007669"/>
    <property type="project" value="UniProtKB-KW"/>
</dbReference>
<dbReference type="Gene3D" id="1.50.10.10">
    <property type="match status" value="1"/>
</dbReference>
<dbReference type="InterPro" id="IPR008928">
    <property type="entry name" value="6-hairpin_glycosidase_sf"/>
</dbReference>
<dbReference type="InterPro" id="IPR012341">
    <property type="entry name" value="6hp_glycosidase-like_sf"/>
</dbReference>
<dbReference type="InterPro" id="IPR011613">
    <property type="entry name" value="GH15-like"/>
</dbReference>
<dbReference type="PANTHER" id="PTHR31616:SF0">
    <property type="entry name" value="GLUCAN 1,4-ALPHA-GLUCOSIDASE"/>
    <property type="match status" value="1"/>
</dbReference>
<dbReference type="PANTHER" id="PTHR31616">
    <property type="entry name" value="TREHALASE"/>
    <property type="match status" value="1"/>
</dbReference>
<dbReference type="Pfam" id="PF00723">
    <property type="entry name" value="Glyco_hydro_15"/>
    <property type="match status" value="1"/>
</dbReference>
<dbReference type="SUPFAM" id="SSF48208">
    <property type="entry name" value="Six-hairpin glycosidases"/>
    <property type="match status" value="1"/>
</dbReference>
<feature type="chain" id="PRO_0000443931" description="Isomaltose glucohydrolase">
    <location>
        <begin position="1"/>
        <end position="385"/>
    </location>
</feature>
<feature type="active site" description="Proton acceptor" evidence="2">
    <location>
        <position position="175"/>
    </location>
</feature>
<feature type="active site" description="Proton donor" evidence="6">
    <location>
        <position position="178"/>
    </location>
</feature>
<feature type="active site" description="Proton acceptor" evidence="6">
    <location>
        <position position="335"/>
    </location>
</feature>
<feature type="binding site" evidence="1">
    <location>
        <position position="125"/>
    </location>
    <ligand>
        <name>substrate</name>
    </ligand>
</feature>
<feature type="mutagenesis site" description="Loss of glucohydrolase activity." evidence="3">
    <original>E</original>
    <variation>A</variation>
    <location>
        <position position="178"/>
    </location>
</feature>
<feature type="mutagenesis site" description="Loss of glucohydrolase activity." evidence="3">
    <original>E</original>
    <variation>A</variation>
    <location>
        <position position="335"/>
    </location>
</feature>
<feature type="helix" evidence="9">
    <location>
        <begin position="12"/>
        <end position="32"/>
    </location>
</feature>
<feature type="helix" evidence="9">
    <location>
        <begin position="46"/>
        <end position="48"/>
    </location>
</feature>
<feature type="helix" evidence="9">
    <location>
        <begin position="54"/>
        <end position="67"/>
    </location>
</feature>
<feature type="helix" evidence="9">
    <location>
        <begin position="70"/>
        <end position="85"/>
    </location>
</feature>
<feature type="helix" evidence="9">
    <location>
        <begin position="88"/>
        <end position="99"/>
    </location>
</feature>
<feature type="helix" evidence="9">
    <location>
        <begin position="106"/>
        <end position="108"/>
    </location>
</feature>
<feature type="strand" evidence="9">
    <location>
        <begin position="112"/>
        <end position="115"/>
    </location>
</feature>
<feature type="strand" evidence="9">
    <location>
        <begin position="118"/>
        <end position="120"/>
    </location>
</feature>
<feature type="helix" evidence="9">
    <location>
        <begin position="124"/>
        <end position="127"/>
    </location>
</feature>
<feature type="helix" evidence="9">
    <location>
        <begin position="131"/>
        <end position="147"/>
    </location>
</feature>
<feature type="helix" evidence="9">
    <location>
        <begin position="151"/>
        <end position="153"/>
    </location>
</feature>
<feature type="helix" evidence="9">
    <location>
        <begin position="155"/>
        <end position="168"/>
    </location>
</feature>
<feature type="helix" evidence="9">
    <location>
        <begin position="186"/>
        <end position="200"/>
    </location>
</feature>
<feature type="helix" evidence="9">
    <location>
        <begin position="203"/>
        <end position="205"/>
    </location>
</feature>
<feature type="helix" evidence="9">
    <location>
        <begin position="211"/>
        <end position="228"/>
    </location>
</feature>
<feature type="strand" evidence="9">
    <location>
        <begin position="229"/>
        <end position="231"/>
    </location>
</feature>
<feature type="helix" evidence="9">
    <location>
        <begin position="248"/>
        <end position="251"/>
    </location>
</feature>
<feature type="turn" evidence="9">
    <location>
        <begin position="252"/>
        <end position="255"/>
    </location>
</feature>
<feature type="helix" evidence="9">
    <location>
        <begin position="263"/>
        <end position="276"/>
    </location>
</feature>
<feature type="strand" evidence="10">
    <location>
        <begin position="281"/>
        <end position="284"/>
    </location>
</feature>
<feature type="helix" evidence="9">
    <location>
        <begin position="290"/>
        <end position="292"/>
    </location>
</feature>
<feature type="helix" evidence="9">
    <location>
        <begin position="297"/>
        <end position="309"/>
    </location>
</feature>
<feature type="helix" evidence="9">
    <location>
        <begin position="313"/>
        <end position="324"/>
    </location>
</feature>
<feature type="strand" evidence="9">
    <location>
        <begin position="335"/>
        <end position="337"/>
    </location>
</feature>
<feature type="helix" evidence="9">
    <location>
        <begin position="344"/>
        <end position="346"/>
    </location>
</feature>
<feature type="helix" evidence="9">
    <location>
        <begin position="347"/>
        <end position="354"/>
    </location>
</feature>
<feature type="helix" evidence="9">
    <location>
        <begin position="362"/>
        <end position="374"/>
    </location>
</feature>
<keyword id="KW-0002">3D-structure</keyword>
<keyword id="KW-0119">Carbohydrate metabolism</keyword>
<keyword id="KW-0963">Cytoplasm</keyword>
<keyword id="KW-0326">Glycosidase</keyword>
<keyword id="KW-0378">Hydrolase</keyword>
<keyword id="KW-0624">Polysaccharide degradation</keyword>
<keyword id="KW-1185">Reference proteome</keyword>